<proteinExistence type="predicted"/>
<keyword id="KW-0010">Activator</keyword>
<keyword id="KW-0238">DNA-binding</keyword>
<keyword id="KW-0804">Transcription</keyword>
<keyword id="KW-0805">Transcription regulation</keyword>
<sequence length="129" mass="14556">MKNNLREEKEVVFDGCMNVLSLPSGWKAITPKKNNATSEIIVLFIPPKASYHIILKYNKTKHCELFFSDHITGEQDIIYSQNAFFSHVINHTIALVDVLNKKSYASNVIKFLITMEGGGDILSESKRAP</sequence>
<protein>
    <recommendedName>
        <fullName>Protein PerB</fullName>
    </recommendedName>
    <alternativeName>
        <fullName>Protein BfpV</fullName>
    </alternativeName>
</protein>
<reference key="1">
    <citation type="journal article" date="1996" name="Mol. Microbiol.">
        <title>Cloning and characterization of bfpTVW, genes required for the transcriptional activation of bfpA in enteropathogenic Escherichia coli.</title>
        <authorList>
            <person name="Tobe T."/>
            <person name="Schoolnik G.K."/>
            <person name="Sohel I."/>
            <person name="Bustamante V.H."/>
            <person name="Puente J.L."/>
        </authorList>
    </citation>
    <scope>NUCLEOTIDE SEQUENCE [GENOMIC DNA]</scope>
    <source>
        <strain>O111:H- / B171 / EPEC</strain>
    </source>
</reference>
<feature type="chain" id="PRO_0000372764" description="Protein PerB">
    <location>
        <begin position="1"/>
        <end position="129"/>
    </location>
</feature>
<comment type="function">
    <text>Positive regulatory protein of bfpA, the gene coding for the bundle-forming pilus of EPEC.</text>
</comment>
<gene>
    <name type="primary">perB</name>
    <name type="synonym">bfpV</name>
</gene>
<dbReference type="EMBL" id="L42638">
    <property type="protein sequence ID" value="AAB36831.1"/>
    <property type="molecule type" value="Genomic_DNA"/>
</dbReference>
<dbReference type="RefSeq" id="YP_001965398.1">
    <property type="nucleotide sequence ID" value="NC_010862.1"/>
</dbReference>
<dbReference type="SMR" id="P0C961"/>
<dbReference type="GO" id="GO:0003677">
    <property type="term" value="F:DNA binding"/>
    <property type="evidence" value="ECO:0007669"/>
    <property type="project" value="UniProtKB-KW"/>
</dbReference>
<dbReference type="InterPro" id="IPR009513">
    <property type="entry name" value="PerB"/>
</dbReference>
<dbReference type="Pfam" id="PF06590">
    <property type="entry name" value="PerB"/>
    <property type="match status" value="1"/>
</dbReference>
<dbReference type="PIRSF" id="PIRSF009562">
    <property type="entry name" value="PerB"/>
    <property type="match status" value="1"/>
</dbReference>
<organism>
    <name type="scientific">Escherichia coli O111:H-</name>
    <dbReference type="NCBI Taxonomy" id="168927"/>
    <lineage>
        <taxon>Bacteria</taxon>
        <taxon>Pseudomonadati</taxon>
        <taxon>Pseudomonadota</taxon>
        <taxon>Gammaproteobacteria</taxon>
        <taxon>Enterobacterales</taxon>
        <taxon>Enterobacteriaceae</taxon>
        <taxon>Escherichia</taxon>
    </lineage>
</organism>
<name>PERB_ECO11</name>
<accession>P0C961</accession>
<accession>P43474</accession>